<evidence type="ECO:0000250" key="1">
    <source>
        <dbReference type="UniProtKB" id="O59188"/>
    </source>
</evidence>
<evidence type="ECO:0000255" key="2">
    <source>
        <dbReference type="PROSITE-ProRule" id="PRU00319"/>
    </source>
</evidence>
<reference key="1">
    <citation type="journal article" date="2003" name="Mol. Microbiol.">
        <title>An integrated analysis of the genome of the hyperthermophilic archaeon Pyrococcus abyssi.</title>
        <authorList>
            <person name="Cohen G.N."/>
            <person name="Barbe V."/>
            <person name="Flament D."/>
            <person name="Galperin M."/>
            <person name="Heilig R."/>
            <person name="Lecompte O."/>
            <person name="Poch O."/>
            <person name="Prieur D."/>
            <person name="Querellou J."/>
            <person name="Ripp R."/>
            <person name="Thierry J.-C."/>
            <person name="Van der Oost J."/>
            <person name="Weissenbach J."/>
            <person name="Zivanovic Y."/>
            <person name="Forterre P."/>
        </authorList>
    </citation>
    <scope>NUCLEOTIDE SEQUENCE [LARGE SCALE GENOMIC DNA]</scope>
    <source>
        <strain>GE5 / Orsay</strain>
    </source>
</reference>
<reference key="2">
    <citation type="journal article" date="2012" name="Curr. Microbiol.">
        <title>Re-annotation of two hyperthermophilic archaea Pyrococcus abyssi GE5 and Pyrococcus furiosus DSM 3638.</title>
        <authorList>
            <person name="Gao J."/>
            <person name="Wang J."/>
        </authorList>
    </citation>
    <scope>GENOME REANNOTATION</scope>
    <source>
        <strain>GE5 / Orsay</strain>
    </source>
</reference>
<sequence length="151" mass="17048">MRVSLDEIDRRIIKILQKDGKAPLREISKITGLAESTIHERIKKLRESGVIRKFTAIVNPEALGYSMLAFILIKVKAGKYAEVASNLVKYEEIMEVYETTGDYDMVVKIRTKNSEELNSFLDVIGSIPGVEGTHTMIVLKTHKETTELPIK</sequence>
<comment type="function">
    <text evidence="1">DNA-binding protein involved in the repression of transcription of a large number of genes, thereby arresting growth, in response to environmental changes.</text>
</comment>
<comment type="activity regulation">
    <text evidence="1">In the famine mode, FL11 forms dimers and acts as a repressor, leading to growth arrest. In the feast mode, in the presence of high concentrations of lysine or arginine, four dimers assemble into an octamer and cover the fl11 and lysine biosynthesis promoters. This leads to the inhibition of fl11 expression and lysine biosynthesis, decrease of the FL11 concentration in the cell, derepression of the target genes and activation of the metabolism.</text>
</comment>
<comment type="subunit">
    <text evidence="1">Homodimer. Binds DNA as a dimer and an octamer.</text>
</comment>
<keyword id="KW-0238">DNA-binding</keyword>
<keyword id="KW-0678">Repressor</keyword>
<keyword id="KW-0346">Stress response</keyword>
<keyword id="KW-0804">Transcription</keyword>
<keyword id="KW-0805">Transcription regulation</keyword>
<proteinExistence type="inferred from homology"/>
<dbReference type="EMBL" id="AJ248285">
    <property type="protein sequence ID" value="CAB49562.1"/>
    <property type="molecule type" value="Genomic_DNA"/>
</dbReference>
<dbReference type="EMBL" id="HE613800">
    <property type="protein sequence ID" value="CCE70034.1"/>
    <property type="molecule type" value="Genomic_DNA"/>
</dbReference>
<dbReference type="PIR" id="A75106">
    <property type="entry name" value="A75106"/>
</dbReference>
<dbReference type="RefSeq" id="WP_010867764.1">
    <property type="nucleotide sequence ID" value="NC_000868.1"/>
</dbReference>
<dbReference type="SMR" id="Q9V0Y9"/>
<dbReference type="STRING" id="272844.PAB1938"/>
<dbReference type="KEGG" id="pab:PAB1938"/>
<dbReference type="PATRIC" id="fig|272844.11.peg.680"/>
<dbReference type="eggNOG" id="arCOG01580">
    <property type="taxonomic scope" value="Archaea"/>
</dbReference>
<dbReference type="HOGENOM" id="CLU_091233_5_4_2"/>
<dbReference type="OrthoDB" id="6995at2157"/>
<dbReference type="PhylomeDB" id="Q9V0Y9"/>
<dbReference type="Proteomes" id="UP000000810">
    <property type="component" value="Chromosome"/>
</dbReference>
<dbReference type="Proteomes" id="UP000009139">
    <property type="component" value="Chromosome"/>
</dbReference>
<dbReference type="GO" id="GO:0005829">
    <property type="term" value="C:cytosol"/>
    <property type="evidence" value="ECO:0007669"/>
    <property type="project" value="TreeGrafter"/>
</dbReference>
<dbReference type="GO" id="GO:0043565">
    <property type="term" value="F:sequence-specific DNA binding"/>
    <property type="evidence" value="ECO:0007669"/>
    <property type="project" value="InterPro"/>
</dbReference>
<dbReference type="GO" id="GO:0043200">
    <property type="term" value="P:response to amino acid"/>
    <property type="evidence" value="ECO:0007669"/>
    <property type="project" value="TreeGrafter"/>
</dbReference>
<dbReference type="CDD" id="cd00090">
    <property type="entry name" value="HTH_ARSR"/>
    <property type="match status" value="1"/>
</dbReference>
<dbReference type="Gene3D" id="3.30.70.920">
    <property type="match status" value="1"/>
</dbReference>
<dbReference type="Gene3D" id="1.10.10.10">
    <property type="entry name" value="Winged helix-like DNA-binding domain superfamily/Winged helix DNA-binding domain"/>
    <property type="match status" value="1"/>
</dbReference>
<dbReference type="InterPro" id="IPR011991">
    <property type="entry name" value="ArsR-like_HTH"/>
</dbReference>
<dbReference type="InterPro" id="IPR000485">
    <property type="entry name" value="AsnC-type_HTH_dom"/>
</dbReference>
<dbReference type="InterPro" id="IPR011008">
    <property type="entry name" value="Dimeric_a/b-barrel"/>
</dbReference>
<dbReference type="InterPro" id="IPR019888">
    <property type="entry name" value="Tscrpt_reg_AsnC-like"/>
</dbReference>
<dbReference type="InterPro" id="IPR019887">
    <property type="entry name" value="Tscrpt_reg_AsnC/Lrp_C"/>
</dbReference>
<dbReference type="InterPro" id="IPR036388">
    <property type="entry name" value="WH-like_DNA-bd_sf"/>
</dbReference>
<dbReference type="InterPro" id="IPR036390">
    <property type="entry name" value="WH_DNA-bd_sf"/>
</dbReference>
<dbReference type="PANTHER" id="PTHR30154">
    <property type="entry name" value="LEUCINE-RESPONSIVE REGULATORY PROTEIN"/>
    <property type="match status" value="1"/>
</dbReference>
<dbReference type="PANTHER" id="PTHR30154:SF34">
    <property type="entry name" value="TRANSCRIPTIONAL REGULATOR AZLB"/>
    <property type="match status" value="1"/>
</dbReference>
<dbReference type="Pfam" id="PF01037">
    <property type="entry name" value="AsnC_trans_reg"/>
    <property type="match status" value="1"/>
</dbReference>
<dbReference type="Pfam" id="PF13404">
    <property type="entry name" value="HTH_AsnC-type"/>
    <property type="match status" value="1"/>
</dbReference>
<dbReference type="PRINTS" id="PR00033">
    <property type="entry name" value="HTHASNC"/>
</dbReference>
<dbReference type="SMART" id="SM00344">
    <property type="entry name" value="HTH_ASNC"/>
    <property type="match status" value="1"/>
</dbReference>
<dbReference type="SUPFAM" id="SSF54909">
    <property type="entry name" value="Dimeric alpha+beta barrel"/>
    <property type="match status" value="1"/>
</dbReference>
<dbReference type="SUPFAM" id="SSF46785">
    <property type="entry name" value="Winged helix' DNA-binding domain"/>
    <property type="match status" value="1"/>
</dbReference>
<dbReference type="PROSITE" id="PS50956">
    <property type="entry name" value="HTH_ASNC_2"/>
    <property type="match status" value="1"/>
</dbReference>
<feature type="chain" id="PRO_0000111767" description="HTH-type transcriptional regulator FL11">
    <location>
        <begin position="1"/>
        <end position="151"/>
    </location>
</feature>
<feature type="domain" description="HTH asnC-type" evidence="2">
    <location>
        <begin position="5"/>
        <end position="66"/>
    </location>
</feature>
<feature type="DNA-binding region" description="H-T-H motif" evidence="2">
    <location>
        <begin position="24"/>
        <end position="43"/>
    </location>
</feature>
<feature type="binding site" evidence="1">
    <location>
        <begin position="98"/>
        <end position="104"/>
    </location>
    <ligand>
        <name>L-arginine</name>
        <dbReference type="ChEBI" id="CHEBI:32682"/>
    </ligand>
</feature>
<feature type="binding site" evidence="1">
    <location>
        <position position="118"/>
    </location>
    <ligand>
        <name>L-lysine</name>
        <dbReference type="ChEBI" id="CHEBI:32551"/>
    </ligand>
</feature>
<feature type="binding site" evidence="1">
    <location>
        <position position="122"/>
    </location>
    <ligand>
        <name>L-arginine</name>
        <dbReference type="ChEBI" id="CHEBI:32682"/>
    </ligand>
</feature>
<feature type="binding site" evidence="1">
    <location>
        <position position="122"/>
    </location>
    <ligand>
        <name>L-lysine</name>
        <dbReference type="ChEBI" id="CHEBI:32551"/>
    </ligand>
</feature>
<feature type="binding site" evidence="1">
    <location>
        <begin position="133"/>
        <end position="135"/>
    </location>
    <ligand>
        <name>L-arginine</name>
        <dbReference type="ChEBI" id="CHEBI:32682"/>
    </ligand>
</feature>
<feature type="binding site" evidence="1">
    <location>
        <begin position="133"/>
        <end position="135"/>
    </location>
    <ligand>
        <name>L-lysine</name>
        <dbReference type="ChEBI" id="CHEBI:32551"/>
    </ligand>
</feature>
<name>REG6_PYRAB</name>
<organism>
    <name type="scientific">Pyrococcus abyssi (strain GE5 / Orsay)</name>
    <dbReference type="NCBI Taxonomy" id="272844"/>
    <lineage>
        <taxon>Archaea</taxon>
        <taxon>Methanobacteriati</taxon>
        <taxon>Methanobacteriota</taxon>
        <taxon>Thermococci</taxon>
        <taxon>Thermococcales</taxon>
        <taxon>Thermococcaceae</taxon>
        <taxon>Pyrococcus</taxon>
    </lineage>
</organism>
<protein>
    <recommendedName>
        <fullName evidence="1">HTH-type transcriptional regulator FL11</fullName>
    </recommendedName>
    <alternativeName>
        <fullName evidence="1">Feast/famine regulatory protein FL11</fullName>
        <shortName evidence="1">FFRP FL11</shortName>
    </alternativeName>
</protein>
<gene>
    <name evidence="1" type="primary">fl11</name>
    <name type="ordered locus">PYRAB06490</name>
    <name type="ORF">PAB1938</name>
</gene>
<accession>Q9V0Y9</accession>
<accession>G8ZJA7</accession>